<organism>
    <name type="scientific">Salinispora arenicola (strain CNS-205)</name>
    <dbReference type="NCBI Taxonomy" id="391037"/>
    <lineage>
        <taxon>Bacteria</taxon>
        <taxon>Bacillati</taxon>
        <taxon>Actinomycetota</taxon>
        <taxon>Actinomycetes</taxon>
        <taxon>Micromonosporales</taxon>
        <taxon>Micromonosporaceae</taxon>
        <taxon>Salinispora</taxon>
    </lineage>
</organism>
<protein>
    <recommendedName>
        <fullName evidence="1">Bifunctional protein FolD 2</fullName>
    </recommendedName>
    <domain>
        <recommendedName>
            <fullName evidence="1">Methylenetetrahydrofolate dehydrogenase</fullName>
            <ecNumber evidence="1">1.5.1.5</ecNumber>
        </recommendedName>
    </domain>
    <domain>
        <recommendedName>
            <fullName evidence="1">Methenyltetrahydrofolate cyclohydrolase</fullName>
            <ecNumber evidence="1">3.5.4.9</ecNumber>
        </recommendedName>
    </domain>
</protein>
<reference key="1">
    <citation type="submission" date="2007-10" db="EMBL/GenBank/DDBJ databases">
        <title>Complete sequence of Salinispora arenicola CNS-205.</title>
        <authorList>
            <consortium name="US DOE Joint Genome Institute"/>
            <person name="Copeland A."/>
            <person name="Lucas S."/>
            <person name="Lapidus A."/>
            <person name="Barry K."/>
            <person name="Glavina del Rio T."/>
            <person name="Dalin E."/>
            <person name="Tice H."/>
            <person name="Pitluck S."/>
            <person name="Foster B."/>
            <person name="Schmutz J."/>
            <person name="Larimer F."/>
            <person name="Land M."/>
            <person name="Hauser L."/>
            <person name="Kyrpides N."/>
            <person name="Ivanova N."/>
            <person name="Jensen P.R."/>
            <person name="Moore B.S."/>
            <person name="Penn K."/>
            <person name="Jenkins C."/>
            <person name="Udwary D."/>
            <person name="Xiang L."/>
            <person name="Gontang E."/>
            <person name="Richardson P."/>
        </authorList>
    </citation>
    <scope>NUCLEOTIDE SEQUENCE [LARGE SCALE GENOMIC DNA]</scope>
    <source>
        <strain>CNS-205</strain>
    </source>
</reference>
<proteinExistence type="inferred from homology"/>
<feature type="chain" id="PRO_0000340594" description="Bifunctional protein FolD 2">
    <location>
        <begin position="1"/>
        <end position="286"/>
    </location>
</feature>
<feature type="binding site" evidence="1">
    <location>
        <begin position="165"/>
        <end position="167"/>
    </location>
    <ligand>
        <name>NADP(+)</name>
        <dbReference type="ChEBI" id="CHEBI:58349"/>
    </ligand>
</feature>
<feature type="binding site" evidence="1">
    <location>
        <position position="192"/>
    </location>
    <ligand>
        <name>NADP(+)</name>
        <dbReference type="ChEBI" id="CHEBI:58349"/>
    </ligand>
</feature>
<feature type="binding site" evidence="1">
    <location>
        <position position="233"/>
    </location>
    <ligand>
        <name>NADP(+)</name>
        <dbReference type="ChEBI" id="CHEBI:58349"/>
    </ligand>
</feature>
<name>FOLD2_SALAI</name>
<evidence type="ECO:0000255" key="1">
    <source>
        <dbReference type="HAMAP-Rule" id="MF_01576"/>
    </source>
</evidence>
<dbReference type="EC" id="1.5.1.5" evidence="1"/>
<dbReference type="EC" id="3.5.4.9" evidence="1"/>
<dbReference type="EMBL" id="CP000850">
    <property type="protein sequence ID" value="ABV99964.1"/>
    <property type="molecule type" value="Genomic_DNA"/>
</dbReference>
<dbReference type="SMR" id="A8M449"/>
<dbReference type="STRING" id="391037.Sare_4175"/>
<dbReference type="KEGG" id="saq:Sare_4175"/>
<dbReference type="PATRIC" id="fig|391037.6.peg.4215"/>
<dbReference type="eggNOG" id="COG0190">
    <property type="taxonomic scope" value="Bacteria"/>
</dbReference>
<dbReference type="HOGENOM" id="CLU_034045_3_0_11"/>
<dbReference type="OrthoDB" id="9803580at2"/>
<dbReference type="UniPathway" id="UPA00193"/>
<dbReference type="GO" id="GO:0005829">
    <property type="term" value="C:cytosol"/>
    <property type="evidence" value="ECO:0007669"/>
    <property type="project" value="TreeGrafter"/>
</dbReference>
<dbReference type="GO" id="GO:0004477">
    <property type="term" value="F:methenyltetrahydrofolate cyclohydrolase activity"/>
    <property type="evidence" value="ECO:0007669"/>
    <property type="project" value="UniProtKB-UniRule"/>
</dbReference>
<dbReference type="GO" id="GO:0004488">
    <property type="term" value="F:methylenetetrahydrofolate dehydrogenase (NADP+) activity"/>
    <property type="evidence" value="ECO:0007669"/>
    <property type="project" value="UniProtKB-UniRule"/>
</dbReference>
<dbReference type="GO" id="GO:0000105">
    <property type="term" value="P:L-histidine biosynthetic process"/>
    <property type="evidence" value="ECO:0007669"/>
    <property type="project" value="UniProtKB-KW"/>
</dbReference>
<dbReference type="GO" id="GO:0009086">
    <property type="term" value="P:methionine biosynthetic process"/>
    <property type="evidence" value="ECO:0007669"/>
    <property type="project" value="UniProtKB-KW"/>
</dbReference>
<dbReference type="GO" id="GO:0006164">
    <property type="term" value="P:purine nucleotide biosynthetic process"/>
    <property type="evidence" value="ECO:0007669"/>
    <property type="project" value="UniProtKB-KW"/>
</dbReference>
<dbReference type="GO" id="GO:0035999">
    <property type="term" value="P:tetrahydrofolate interconversion"/>
    <property type="evidence" value="ECO:0007669"/>
    <property type="project" value="UniProtKB-UniRule"/>
</dbReference>
<dbReference type="CDD" id="cd01080">
    <property type="entry name" value="NAD_bind_m-THF_DH_Cyclohyd"/>
    <property type="match status" value="1"/>
</dbReference>
<dbReference type="FunFam" id="3.40.50.10860:FF:000005">
    <property type="entry name" value="C-1-tetrahydrofolate synthase, cytoplasmic, putative"/>
    <property type="match status" value="1"/>
</dbReference>
<dbReference type="Gene3D" id="3.40.50.10860">
    <property type="entry name" value="Leucine Dehydrogenase, chain A, domain 1"/>
    <property type="match status" value="1"/>
</dbReference>
<dbReference type="Gene3D" id="3.40.50.720">
    <property type="entry name" value="NAD(P)-binding Rossmann-like Domain"/>
    <property type="match status" value="1"/>
</dbReference>
<dbReference type="HAMAP" id="MF_01576">
    <property type="entry name" value="THF_DHG_CYH"/>
    <property type="match status" value="1"/>
</dbReference>
<dbReference type="InterPro" id="IPR046346">
    <property type="entry name" value="Aminoacid_DH-like_N_sf"/>
</dbReference>
<dbReference type="InterPro" id="IPR036291">
    <property type="entry name" value="NAD(P)-bd_dom_sf"/>
</dbReference>
<dbReference type="InterPro" id="IPR000672">
    <property type="entry name" value="THF_DH/CycHdrlase"/>
</dbReference>
<dbReference type="InterPro" id="IPR020630">
    <property type="entry name" value="THF_DH/CycHdrlase_cat_dom"/>
</dbReference>
<dbReference type="InterPro" id="IPR020631">
    <property type="entry name" value="THF_DH/CycHdrlase_NAD-bd_dom"/>
</dbReference>
<dbReference type="NCBIfam" id="NF010789">
    <property type="entry name" value="PRK14193.1"/>
    <property type="match status" value="1"/>
</dbReference>
<dbReference type="PANTHER" id="PTHR48099:SF5">
    <property type="entry name" value="C-1-TETRAHYDROFOLATE SYNTHASE, CYTOPLASMIC"/>
    <property type="match status" value="1"/>
</dbReference>
<dbReference type="PANTHER" id="PTHR48099">
    <property type="entry name" value="C-1-TETRAHYDROFOLATE SYNTHASE, CYTOPLASMIC-RELATED"/>
    <property type="match status" value="1"/>
</dbReference>
<dbReference type="Pfam" id="PF00763">
    <property type="entry name" value="THF_DHG_CYH"/>
    <property type="match status" value="1"/>
</dbReference>
<dbReference type="Pfam" id="PF02882">
    <property type="entry name" value="THF_DHG_CYH_C"/>
    <property type="match status" value="1"/>
</dbReference>
<dbReference type="PRINTS" id="PR00085">
    <property type="entry name" value="THFDHDRGNASE"/>
</dbReference>
<dbReference type="SUPFAM" id="SSF53223">
    <property type="entry name" value="Aminoacid dehydrogenase-like, N-terminal domain"/>
    <property type="match status" value="1"/>
</dbReference>
<dbReference type="SUPFAM" id="SSF51735">
    <property type="entry name" value="NAD(P)-binding Rossmann-fold domains"/>
    <property type="match status" value="1"/>
</dbReference>
<gene>
    <name evidence="1" type="primary">folD2</name>
    <name type="ordered locus">Sare_4175</name>
</gene>
<accession>A8M449</accession>
<keyword id="KW-0028">Amino-acid biosynthesis</keyword>
<keyword id="KW-0368">Histidine biosynthesis</keyword>
<keyword id="KW-0378">Hydrolase</keyword>
<keyword id="KW-0486">Methionine biosynthesis</keyword>
<keyword id="KW-0511">Multifunctional enzyme</keyword>
<keyword id="KW-0521">NADP</keyword>
<keyword id="KW-0554">One-carbon metabolism</keyword>
<keyword id="KW-0560">Oxidoreductase</keyword>
<keyword id="KW-0658">Purine biosynthesis</keyword>
<sequence length="286" mass="29770">MTATLLDGKATAAEIKDELRVRVKALAERGVTPGLGTVLVGADPGSQAYVNGKHRDCAEVGVASLRRELPADASQEQVDAVLADLNADPACHGYIVQLPLPDHLDTQRVLELIDPEKDADGLHPVNLGRLVLGYPGPLPCTPRGIVELLRRHDVALRGARVAVVGRGNTVGRPLGLLLTRRSENATVTLCHTGTLDLSAHTRAADIVIVAAGVPGLLTPDMITPGAVVVDVGITRVIGPDGKGRYTGDVDPGVTEVAGALVPMPGGVGPMTRAMLLTNVVERAERG</sequence>
<comment type="function">
    <text evidence="1">Catalyzes the oxidation of 5,10-methylenetetrahydrofolate to 5,10-methenyltetrahydrofolate and then the hydrolysis of 5,10-methenyltetrahydrofolate to 10-formyltetrahydrofolate.</text>
</comment>
<comment type="catalytic activity">
    <reaction evidence="1">
        <text>(6R)-5,10-methylene-5,6,7,8-tetrahydrofolate + NADP(+) = (6R)-5,10-methenyltetrahydrofolate + NADPH</text>
        <dbReference type="Rhea" id="RHEA:22812"/>
        <dbReference type="ChEBI" id="CHEBI:15636"/>
        <dbReference type="ChEBI" id="CHEBI:57455"/>
        <dbReference type="ChEBI" id="CHEBI:57783"/>
        <dbReference type="ChEBI" id="CHEBI:58349"/>
        <dbReference type="EC" id="1.5.1.5"/>
    </reaction>
</comment>
<comment type="catalytic activity">
    <reaction evidence="1">
        <text>(6R)-5,10-methenyltetrahydrofolate + H2O = (6R)-10-formyltetrahydrofolate + H(+)</text>
        <dbReference type="Rhea" id="RHEA:23700"/>
        <dbReference type="ChEBI" id="CHEBI:15377"/>
        <dbReference type="ChEBI" id="CHEBI:15378"/>
        <dbReference type="ChEBI" id="CHEBI:57455"/>
        <dbReference type="ChEBI" id="CHEBI:195366"/>
        <dbReference type="EC" id="3.5.4.9"/>
    </reaction>
</comment>
<comment type="pathway">
    <text evidence="1">One-carbon metabolism; tetrahydrofolate interconversion.</text>
</comment>
<comment type="subunit">
    <text evidence="1">Homodimer.</text>
</comment>
<comment type="similarity">
    <text evidence="1">Belongs to the tetrahydrofolate dehydrogenase/cyclohydrolase family.</text>
</comment>